<dbReference type="EC" id="2.1.1.186" evidence="1"/>
<dbReference type="EMBL" id="CP000446">
    <property type="protein sequence ID" value="ABI39792.1"/>
    <property type="molecule type" value="Genomic_DNA"/>
</dbReference>
<dbReference type="RefSeq" id="WP_011623472.1">
    <property type="nucleotide sequence ID" value="NC_008321.1"/>
</dbReference>
<dbReference type="SMR" id="Q0HGM5"/>
<dbReference type="KEGG" id="she:Shewmr4_2721"/>
<dbReference type="HOGENOM" id="CLU_043780_0_0_6"/>
<dbReference type="GO" id="GO:0005737">
    <property type="term" value="C:cytoplasm"/>
    <property type="evidence" value="ECO:0007669"/>
    <property type="project" value="UniProtKB-SubCell"/>
</dbReference>
<dbReference type="GO" id="GO:0008757">
    <property type="term" value="F:S-adenosylmethionine-dependent methyltransferase activity"/>
    <property type="evidence" value="ECO:0007669"/>
    <property type="project" value="UniProtKB-UniRule"/>
</dbReference>
<dbReference type="GO" id="GO:0032259">
    <property type="term" value="P:methylation"/>
    <property type="evidence" value="ECO:0007669"/>
    <property type="project" value="UniProtKB-KW"/>
</dbReference>
<dbReference type="GO" id="GO:0006364">
    <property type="term" value="P:rRNA processing"/>
    <property type="evidence" value="ECO:0007669"/>
    <property type="project" value="UniProtKB-UniRule"/>
</dbReference>
<dbReference type="Gene3D" id="3.30.2300.20">
    <property type="match status" value="1"/>
</dbReference>
<dbReference type="Gene3D" id="3.30.70.2810">
    <property type="match status" value="1"/>
</dbReference>
<dbReference type="Gene3D" id="3.40.50.150">
    <property type="entry name" value="Vaccinia Virus protein VP39"/>
    <property type="match status" value="1"/>
</dbReference>
<dbReference type="HAMAP" id="MF_01551">
    <property type="entry name" value="23SrRNA_methyltr_M"/>
    <property type="match status" value="1"/>
</dbReference>
<dbReference type="InterPro" id="IPR040739">
    <property type="entry name" value="RlmM_FDX"/>
</dbReference>
<dbReference type="InterPro" id="IPR048646">
    <property type="entry name" value="RlmM_THUMP-like"/>
</dbReference>
<dbReference type="InterPro" id="IPR002877">
    <property type="entry name" value="RNA_MeTrfase_FtsJ_dom"/>
</dbReference>
<dbReference type="InterPro" id="IPR011224">
    <property type="entry name" value="rRNA_MeTrfase_M"/>
</dbReference>
<dbReference type="InterPro" id="IPR029063">
    <property type="entry name" value="SAM-dependent_MTases_sf"/>
</dbReference>
<dbReference type="NCBIfam" id="NF008734">
    <property type="entry name" value="PRK11760.1"/>
    <property type="match status" value="1"/>
</dbReference>
<dbReference type="PANTHER" id="PTHR37524">
    <property type="entry name" value="RIBOSOMAL RNA LARGE SUBUNIT METHYLTRANSFERASE M"/>
    <property type="match status" value="1"/>
</dbReference>
<dbReference type="PANTHER" id="PTHR37524:SF2">
    <property type="entry name" value="RIBOSOMAL RNA METHYLTRANSFERASE FTSJ DOMAIN-CONTAINING PROTEIN"/>
    <property type="match status" value="1"/>
</dbReference>
<dbReference type="Pfam" id="PF01728">
    <property type="entry name" value="FtsJ"/>
    <property type="match status" value="1"/>
</dbReference>
<dbReference type="Pfam" id="PF18125">
    <property type="entry name" value="RlmM_FDX"/>
    <property type="match status" value="1"/>
</dbReference>
<dbReference type="Pfam" id="PF21239">
    <property type="entry name" value="RLMM_N"/>
    <property type="match status" value="1"/>
</dbReference>
<dbReference type="PIRSF" id="PIRSF028774">
    <property type="entry name" value="UCP028774"/>
    <property type="match status" value="1"/>
</dbReference>
<dbReference type="SUPFAM" id="SSF53335">
    <property type="entry name" value="S-adenosyl-L-methionine-dependent methyltransferases"/>
    <property type="match status" value="1"/>
</dbReference>
<name>RLMM_SHESM</name>
<proteinExistence type="inferred from homology"/>
<evidence type="ECO:0000255" key="1">
    <source>
        <dbReference type="HAMAP-Rule" id="MF_01551"/>
    </source>
</evidence>
<comment type="function">
    <text evidence="1">Catalyzes the 2'-O-methylation at nucleotide C2498 in 23S rRNA.</text>
</comment>
<comment type="catalytic activity">
    <reaction evidence="1">
        <text>cytidine(2498) in 23S rRNA + S-adenosyl-L-methionine = 2'-O-methylcytidine(2498) in 23S rRNA + S-adenosyl-L-homocysteine + H(+)</text>
        <dbReference type="Rhea" id="RHEA:42788"/>
        <dbReference type="Rhea" id="RHEA-COMP:10244"/>
        <dbReference type="Rhea" id="RHEA-COMP:10245"/>
        <dbReference type="ChEBI" id="CHEBI:15378"/>
        <dbReference type="ChEBI" id="CHEBI:57856"/>
        <dbReference type="ChEBI" id="CHEBI:59789"/>
        <dbReference type="ChEBI" id="CHEBI:74495"/>
        <dbReference type="ChEBI" id="CHEBI:82748"/>
        <dbReference type="EC" id="2.1.1.186"/>
    </reaction>
</comment>
<comment type="subunit">
    <text evidence="1">Monomer.</text>
</comment>
<comment type="subcellular location">
    <subcellularLocation>
        <location evidence="1">Cytoplasm</location>
    </subcellularLocation>
</comment>
<comment type="similarity">
    <text evidence="1">Belongs to the class I-like SAM-binding methyltransferase superfamily. RNA methyltransferase RlmE family. RlmM subfamily.</text>
</comment>
<accession>Q0HGM5</accession>
<feature type="chain" id="PRO_0000314541" description="Ribosomal RNA large subunit methyltransferase M">
    <location>
        <begin position="1"/>
        <end position="361"/>
    </location>
</feature>
<feature type="active site" description="Proton acceptor" evidence="1">
    <location>
        <position position="305"/>
    </location>
</feature>
<feature type="binding site" evidence="1">
    <location>
        <position position="187"/>
    </location>
    <ligand>
        <name>S-adenosyl-L-methionine</name>
        <dbReference type="ChEBI" id="CHEBI:59789"/>
    </ligand>
</feature>
<feature type="binding site" evidence="1">
    <location>
        <begin position="220"/>
        <end position="223"/>
    </location>
    <ligand>
        <name>S-adenosyl-L-methionine</name>
        <dbReference type="ChEBI" id="CHEBI:59789"/>
    </ligand>
</feature>
<feature type="binding site" evidence="1">
    <location>
        <position position="239"/>
    </location>
    <ligand>
        <name>S-adenosyl-L-methionine</name>
        <dbReference type="ChEBI" id="CHEBI:59789"/>
    </ligand>
</feature>
<feature type="binding site" evidence="1">
    <location>
        <position position="259"/>
    </location>
    <ligand>
        <name>S-adenosyl-L-methionine</name>
        <dbReference type="ChEBI" id="CHEBI:59789"/>
    </ligand>
</feature>
<feature type="binding site" evidence="1">
    <location>
        <position position="276"/>
    </location>
    <ligand>
        <name>S-adenosyl-L-methionine</name>
        <dbReference type="ChEBI" id="CHEBI:59789"/>
    </ligand>
</feature>
<keyword id="KW-0963">Cytoplasm</keyword>
<keyword id="KW-0489">Methyltransferase</keyword>
<keyword id="KW-0698">rRNA processing</keyword>
<keyword id="KW-0949">S-adenosyl-L-methionine</keyword>
<keyword id="KW-0808">Transferase</keyword>
<reference key="1">
    <citation type="submission" date="2006-08" db="EMBL/GenBank/DDBJ databases">
        <title>Complete sequence of Shewanella sp. MR-4.</title>
        <authorList>
            <consortium name="US DOE Joint Genome Institute"/>
            <person name="Copeland A."/>
            <person name="Lucas S."/>
            <person name="Lapidus A."/>
            <person name="Barry K."/>
            <person name="Detter J.C."/>
            <person name="Glavina del Rio T."/>
            <person name="Hammon N."/>
            <person name="Israni S."/>
            <person name="Dalin E."/>
            <person name="Tice H."/>
            <person name="Pitluck S."/>
            <person name="Kiss H."/>
            <person name="Brettin T."/>
            <person name="Bruce D."/>
            <person name="Han C."/>
            <person name="Tapia R."/>
            <person name="Gilna P."/>
            <person name="Schmutz J."/>
            <person name="Larimer F."/>
            <person name="Land M."/>
            <person name="Hauser L."/>
            <person name="Kyrpides N."/>
            <person name="Mikhailova N."/>
            <person name="Nealson K."/>
            <person name="Konstantinidis K."/>
            <person name="Klappenbach J."/>
            <person name="Tiedje J."/>
            <person name="Richardson P."/>
        </authorList>
    </citation>
    <scope>NUCLEOTIDE SEQUENCE [LARGE SCALE GENOMIC DNA]</scope>
    <source>
        <strain>MR-4</strain>
    </source>
</reference>
<organism>
    <name type="scientific">Shewanella sp. (strain MR-4)</name>
    <dbReference type="NCBI Taxonomy" id="60480"/>
    <lineage>
        <taxon>Bacteria</taxon>
        <taxon>Pseudomonadati</taxon>
        <taxon>Pseudomonadota</taxon>
        <taxon>Gammaproteobacteria</taxon>
        <taxon>Alteromonadales</taxon>
        <taxon>Shewanellaceae</taxon>
        <taxon>Shewanella</taxon>
    </lineage>
</organism>
<gene>
    <name evidence="1" type="primary">rlmM</name>
    <name type="ordered locus">Shewmr4_2721</name>
</gene>
<sequence>MKNLFLFCRAGYEKECAAEIQQRAAELNVGGFVKANNNDAYVVYQCFEEDGGDTLVKQLPLDSLIFARQMFAASELLADLPESDRVSPIVAALSDVSKAGELRVETPDTNEAKELSAFCRKFTVPLRQHLKKSGSLLAQENPKRPIIHVCFIGPGRAYAGYSFSNNSSPYFMGIPRLKMAADAPSRSSLKLDEAFAQFVPKEEQEERVRSGMNAVDLGACPGGWTYQLVRRGMMVSAVDNGPMNEKLMETGQVKHFREDGFRFEPQRKNIYWLVCDMVEKPARVAELIEAWAINGWFKEAIFNLKLPMKSRYKEVMAILNTMQEILKENGINEFQLQCKHLYHDRDEVTVHLWIRPSQAWN</sequence>
<protein>
    <recommendedName>
        <fullName evidence="1">Ribosomal RNA large subunit methyltransferase M</fullName>
        <ecNumber evidence="1">2.1.1.186</ecNumber>
    </recommendedName>
    <alternativeName>
        <fullName evidence="1">23S rRNA (cytidine2498-2'-O)-methyltransferase</fullName>
    </alternativeName>
    <alternativeName>
        <fullName evidence="1">23S rRNA 2'-O-ribose methyltransferase RlmM</fullName>
    </alternativeName>
</protein>